<proteinExistence type="evidence at protein level"/>
<keyword id="KW-0002">3D-structure</keyword>
<keyword id="KW-1064">Adaptive immunity</keyword>
<keyword id="KW-0025">Alternative splicing</keyword>
<keyword id="KW-1003">Cell membrane</keyword>
<keyword id="KW-1015">Disulfide bond</keyword>
<keyword id="KW-0967">Endosome</keyword>
<keyword id="KW-0325">Glycoprotein</keyword>
<keyword id="KW-0391">Immunity</keyword>
<keyword id="KW-0393">Immunoglobulin domain</keyword>
<keyword id="KW-0472">Membrane</keyword>
<keyword id="KW-0539">Nucleus</keyword>
<keyword id="KW-1267">Proteomics identification</keyword>
<keyword id="KW-0675">Receptor</keyword>
<keyword id="KW-1185">Reference proteome</keyword>
<keyword id="KW-0677">Repeat</keyword>
<keyword id="KW-0964">Secreted</keyword>
<keyword id="KW-0732">Signal</keyword>
<keyword id="KW-0812">Transmembrane</keyword>
<keyword id="KW-1133">Transmembrane helix</keyword>
<keyword id="KW-0832">Ubl conjugation</keyword>
<protein>
    <recommendedName>
        <fullName evidence="24">Programmed cell death 1 ligand 1</fullName>
        <shortName evidence="23 24">PD-L1</shortName>
        <shortName>PDCD1 ligand 1</shortName>
        <shortName>Programmed death ligand 1</shortName>
        <shortName evidence="22">hPD-L1</shortName>
    </recommendedName>
    <alternativeName>
        <fullName evidence="19">B7 homolog 1</fullName>
        <shortName evidence="19">B7-H1</shortName>
    </alternativeName>
    <cdAntigenName>CD274</cdAntigenName>
</protein>
<accession>Q9NZQ7</accession>
<accession>B2RBA2</accession>
<accession>B4DU27</accession>
<accession>Q14CJ2</accession>
<accession>Q2V8D5</accession>
<accession>Q66RK1</accession>
<accession>Q6WEX4</accession>
<accession>Q9NUZ5</accession>
<evidence type="ECO:0000250" key="1">
    <source>
        <dbReference type="UniProtKB" id="Q9EP73"/>
    </source>
</evidence>
<evidence type="ECO:0000255" key="2"/>
<evidence type="ECO:0000255" key="3">
    <source>
        <dbReference type="PROSITE-ProRule" id="PRU00114"/>
    </source>
</evidence>
<evidence type="ECO:0000269" key="4">
    <source>
    </source>
</evidence>
<evidence type="ECO:0000269" key="5">
    <source>
    </source>
</evidence>
<evidence type="ECO:0000269" key="6">
    <source>
    </source>
</evidence>
<evidence type="ECO:0000269" key="7">
    <source>
    </source>
</evidence>
<evidence type="ECO:0000269" key="8">
    <source>
    </source>
</evidence>
<evidence type="ECO:0000269" key="9">
    <source>
    </source>
</evidence>
<evidence type="ECO:0000269" key="10">
    <source>
    </source>
</evidence>
<evidence type="ECO:0000269" key="11">
    <source>
    </source>
</evidence>
<evidence type="ECO:0000269" key="12">
    <source>
    </source>
</evidence>
<evidence type="ECO:0000269" key="13">
    <source>
    </source>
</evidence>
<evidence type="ECO:0000269" key="14">
    <source>
    </source>
</evidence>
<evidence type="ECO:0000269" key="15">
    <source>
    </source>
</evidence>
<evidence type="ECO:0000269" key="16">
    <source>
    </source>
</evidence>
<evidence type="ECO:0000269" key="17">
    <source>
    </source>
</evidence>
<evidence type="ECO:0000269" key="18">
    <source>
    </source>
</evidence>
<evidence type="ECO:0000303" key="19">
    <source>
    </source>
</evidence>
<evidence type="ECO:0000303" key="20">
    <source>
    </source>
</evidence>
<evidence type="ECO:0000303" key="21">
    <source>
    </source>
</evidence>
<evidence type="ECO:0000303" key="22">
    <source>
    </source>
</evidence>
<evidence type="ECO:0000303" key="23">
    <source>
    </source>
</evidence>
<evidence type="ECO:0000303" key="24">
    <source>
    </source>
</evidence>
<evidence type="ECO:0000303" key="25">
    <source>
    </source>
</evidence>
<evidence type="ECO:0000303" key="26">
    <source ref="4"/>
</evidence>
<evidence type="ECO:0000305" key="27"/>
<evidence type="ECO:0000312" key="28">
    <source>
        <dbReference type="HGNC" id="HGNC:17635"/>
    </source>
</evidence>
<evidence type="ECO:0007744" key="29">
    <source>
        <dbReference type="PDB" id="4ZQK"/>
    </source>
</evidence>
<evidence type="ECO:0007744" key="30">
    <source>
        <dbReference type="PDB" id="5C3T"/>
    </source>
</evidence>
<evidence type="ECO:0007829" key="31">
    <source>
        <dbReference type="PDB" id="4Z18"/>
    </source>
</evidence>
<evidence type="ECO:0007829" key="32">
    <source>
        <dbReference type="PDB" id="5C3T"/>
    </source>
</evidence>
<evidence type="ECO:0007829" key="33">
    <source>
        <dbReference type="PDB" id="5O45"/>
    </source>
</evidence>
<evidence type="ECO:0007829" key="34">
    <source>
        <dbReference type="PDB" id="6L8R"/>
    </source>
</evidence>
<evidence type="ECO:0007829" key="35">
    <source>
        <dbReference type="PDB" id="6NP9"/>
    </source>
</evidence>
<evidence type="ECO:0007829" key="36">
    <source>
        <dbReference type="PDB" id="7DCV"/>
    </source>
</evidence>
<comment type="function">
    <text evidence="4 5 11 12 14 15 18">Plays a critical role in induction and maintenance of immune tolerance to self (PubMed:11015443, PubMed:28813410, PubMed:28813417, PubMed:31399419). As a ligand for the inhibitory receptor PDCD1/PD-1, modulates the activation threshold of T-cells and limits T-cell effector response (PubMed:11015443, PubMed:28813410, PubMed:28813417, PubMed:36727298). Through a yet unknown activating receptor, may costimulate T-cell subsets that predominantly produce interleukin-10 (IL10) (PubMed:10581077). Can also act as a transcription coactivator: in response to hypoxia, translocates into the nucleus via its interaction with phosphorylated STAT3 and promotes transcription of GSDMC, leading to pyroptosis (PubMed:32929201).</text>
</comment>
<comment type="function">
    <text evidence="1 11 12">The PDCD1-mediated inhibitory pathway is exploited by tumors to attenuate anti-tumor immunity and escape destruction by the immune system, thereby facilitating tumor survival (PubMed:28813410, PubMed:28813417). The interaction with PDCD1/PD-1 inhibits cytotoxic T lymphocytes (CTLs) effector function (By similarity). The blockage of the PDCD1-mediated pathway results in the reversal of the exhausted T-cell phenotype and the normalization of the anti-tumor response, providing a rationale for cancer immunotherapy (By similarity).</text>
</comment>
<comment type="subunit">
    <text evidence="5 7 9 11 12 15 18">Interacts with PDCD1 (PubMed:11015443, PubMed:18287011, PubMed:26602187). Interacts (via transmembrane domain) with CMTM4 and CMTM6 (PubMed:28813410, PubMed:28813417). Interacts with (phosphorylated) STAT3; promoting nuclear translocation (PubMed:32929201). Interacts with CD80 (PubMed:36727298).</text>
</comment>
<comment type="subunit">
    <molecule>Isoform 4</molecule>
    <text evidence="13">May form homomultimers.</text>
</comment>
<comment type="interaction">
    <interactant intactId="EBI-4314282">
        <id>Q9NZQ7</id>
    </interactant>
    <interactant intactId="EBI-1031024">
        <id>P33681</id>
        <label>CD80</label>
    </interactant>
    <organismsDiffer>false</organismsDiffer>
    <experiments>11</experiments>
</comment>
<comment type="interaction">
    <interactant intactId="EBI-4314282">
        <id>Q9NZQ7</id>
    </interactant>
    <interactant intactId="EBI-3925367">
        <id>Q8IZR5</id>
        <label>CMTM4</label>
    </interactant>
    <organismsDiffer>false</organismsDiffer>
    <experiments>3</experiments>
</comment>
<comment type="interaction">
    <interactant intactId="EBI-4314282">
        <id>Q9NZQ7</id>
    </interactant>
    <interactant intactId="EBI-1054315">
        <id>Q9NX76</id>
        <label>CMTM6</label>
    </interactant>
    <organismsDiffer>false</organismsDiffer>
    <experiments>14</experiments>
</comment>
<comment type="interaction">
    <interactant intactId="EBI-4314282">
        <id>Q9NZQ7</id>
    </interactant>
    <interactant intactId="EBI-4314328">
        <id>Q15116</id>
        <label>PDCD1</label>
    </interactant>
    <organismsDiffer>false</organismsDiffer>
    <experiments>17</experiments>
</comment>
<comment type="interaction">
    <interactant intactId="EBI-15686469">
        <id>Q9NZQ7-1</id>
    </interactant>
    <interactant intactId="EBI-4314328">
        <id>Q15116</id>
        <label>PDCD1</label>
    </interactant>
    <organismsDiffer>false</organismsDiffer>
    <experiments>2</experiments>
</comment>
<comment type="subcellular location">
    <subcellularLocation>
        <location evidence="11 12 17">Cell membrane</location>
        <topology evidence="2">Single-pass type I membrane protein</topology>
    </subcellularLocation>
    <subcellularLocation>
        <location evidence="12">Early endosome membrane</location>
        <topology evidence="2">Single-pass type I membrane protein</topology>
    </subcellularLocation>
    <subcellularLocation>
        <location evidence="12">Recycling endosome membrane</location>
        <topology evidence="2">Single-pass type I membrane protein</topology>
    </subcellularLocation>
    <subcellularLocation>
        <location evidence="15">Nucleus</location>
    </subcellularLocation>
    <text evidence="12 15">Associates with CMTM6 at recycling endosomes, where it is protected from being targeted for lysosomal degradation (PubMed:28813417). Translocates to the nucleus in response to hypoxia via its interaction with phosphorylated STAT3 (PubMed:32929201).</text>
</comment>
<comment type="subcellular location">
    <molecule>Isoform 1</molecule>
    <subcellularLocation>
        <location evidence="6">Cell membrane</location>
        <topology evidence="2">Single-pass type I membrane protein</topology>
    </subcellularLocation>
</comment>
<comment type="subcellular location">
    <molecule>Isoform 2</molecule>
    <subcellularLocation>
        <location evidence="6">Endomembrane system</location>
        <topology evidence="2">Single-pass type I membrane protein</topology>
    </subcellularLocation>
</comment>
<comment type="subcellular location">
    <molecule>Isoform 4</molecule>
    <subcellularLocation>
        <location evidence="13">Secreted</location>
    </subcellularLocation>
</comment>
<comment type="alternative products">
    <event type="alternative splicing"/>
    <isoform>
        <id>Q9NZQ7-1</id>
        <name>1</name>
        <name>PD-L1I</name>
        <sequence type="displayed"/>
    </isoform>
    <isoform>
        <id>Q9NZQ7-2</id>
        <name>2</name>
        <name>PD-L1II</name>
        <sequence type="described" ref="VSP_013735"/>
    </isoform>
    <isoform>
        <id>Q9NZQ7-3</id>
        <name>3</name>
        <sequence type="described" ref="VSP_013736 VSP_013737"/>
    </isoform>
    <isoform>
        <id>Q9NZQ7-4</id>
        <name>4</name>
        <name evidence="25">secPD-L1</name>
        <sequence type="described" ref="VSP_061953"/>
    </isoform>
</comment>
<comment type="tissue specificity">
    <text evidence="4 5">Highly expressed in the heart, skeletal muscle, placenta and lung. Weakly expressed in the thymus, spleen, kidney and liver. Expressed on activated T- and B-cells, dendritic cells, keratinocytes and monocytes.</text>
</comment>
<comment type="tissue specificity">
    <molecule>Isoform 4</molecule>
    <text evidence="13">Widely expressed, highest in lung, liver and pituitary and in various peripheral blood cells, including neutrophils and some subtypes of lymphoid and myeloid cells.</text>
</comment>
<comment type="induction">
    <text evidence="4 5 11">Up-regulated on T- and B-cells, dendritic cells, keratinocytes and monocytes after LPS and IFNG activation. Up-regulated in B-cells activated by surface Ig cross-linking.</text>
</comment>
<comment type="PTM">
    <text evidence="11 14 16">Ubiquitinated; STUB1 likely mediates polyubiquitination of PD-L1/CD274 triggering its degradation (PubMed:28813410). Ubiquitinated by MARCHF8; leading to degradation (PubMed:34183449). Deubiquitinated by USP22; leading to stabilization (PubMed:31399419).</text>
</comment>
<comment type="disease">
    <text evidence="10">Truncation of the 3'-untranslated (3'-UTR) region of CD274 transcripts leads to elevated expression of CD274 in multiple cancers including T-cell leukemia, diffuse large B-cell lymphoma and stomach adenocarcinoma (PubMed:27281199). Disruption of 3'-UTR region is caused by structural variants that stabilize CD274 transcripts, leading to overexpression (PubMed:27281199). Increased expression in tumors promotes immune evasion and tumor cell growth by allowing malignant cells to escape destruction by the immune system (PubMed:27281199).</text>
</comment>
<comment type="miscellaneous">
    <molecule>Isoform 3</molecule>
    <text evidence="27">May be produced at very low levels due to a premature stop codon in the mRNA, leading to nonsense-mediated mRNA decay.</text>
</comment>
<comment type="similarity">
    <text evidence="27">Belongs to the immunoglobulin superfamily. BTN/MOG family.</text>
</comment>
<comment type="sequence caution" evidence="27">
    <conflict type="erroneous initiation">
        <sequence resource="EMBL-CDS" id="BAA91966"/>
    </conflict>
    <text>Truncated N-terminus.</text>
</comment>
<reference key="1">
    <citation type="journal article" date="1999" name="Nat. Med.">
        <title>B7-H1, a third member of the B7 family, co-stimulates T-cell proliferation and interleukin-10 secretion.</title>
        <authorList>
            <person name="Dong H."/>
            <person name="Zhu G."/>
            <person name="Tamada K."/>
            <person name="Chen L."/>
        </authorList>
    </citation>
    <scope>NUCLEOTIDE SEQUENCE [MRNA] (ISOFORM 1)</scope>
    <scope>FUNCTION</scope>
    <scope>TISSUE SPECIFICITY</scope>
    <scope>INDUCTION</scope>
</reference>
<reference key="2">
    <citation type="journal article" date="2000" name="J. Exp. Med.">
        <title>Engagement of the PD-1 immunoinhibitory receptor by a novel B7-family member leads to negative regulation of lymphocyte activation.</title>
        <authorList>
            <person name="Freeman G.J."/>
            <person name="Long A.J."/>
            <person name="Iwai Y."/>
            <person name="Bourque K."/>
            <person name="Chernova T."/>
            <person name="Nishimura H."/>
            <person name="Fitz L.J."/>
            <person name="Malenkovich N."/>
            <person name="Okazaki T."/>
            <person name="Byrne M.C."/>
            <person name="Horton H.F."/>
            <person name="Fouser L."/>
            <person name="Carter L."/>
            <person name="Ling V."/>
            <person name="Bowman M.R."/>
            <person name="Carreno B.M."/>
            <person name="Collins M."/>
            <person name="Wood C.R."/>
            <person name="Honjo T."/>
        </authorList>
    </citation>
    <scope>NUCLEOTIDE SEQUENCE [MRNA] (ISOFORM 1)</scope>
    <scope>FUNCTION</scope>
    <scope>INTERACTION WITH PDCD1</scope>
    <scope>TISSUE SPECIFICITY</scope>
    <scope>INDUCTION</scope>
    <source>
        <tissue>Placenta</tissue>
    </source>
</reference>
<reference key="3">
    <citation type="journal article" date="2005" name="Acta Pharmacol. Sin.">
        <title>Identification of a novel splice variant of human PD-L1 mRNA encoding an isoform-lacking Igv-like domain.</title>
        <authorList>
            <person name="He X.-H."/>
            <person name="Xu L.-H."/>
            <person name="Liu Y."/>
        </authorList>
    </citation>
    <scope>NUCLEOTIDE SEQUENCE [MRNA] (ISOFORMS 1; 2 AND 3)</scope>
    <scope>SUBCELLULAR LOCATION (ISOFORMS 1 AND 2)</scope>
</reference>
<reference key="4">
    <citation type="submission" date="2005-11" db="EMBL/GenBank/DDBJ databases">
        <title>Expression and significance of PD-L1 variant within tissues of human gastric carcinoma.</title>
        <authorList>
            <person name="Chi X.-Y."/>
            <person name="Zha Q.-B."/>
            <person name="Xu L.-H."/>
            <person name="Jia Q.-T."/>
            <person name="Li F.-Y."/>
            <person name="He X.-H."/>
        </authorList>
    </citation>
    <scope>NUCLEOTIDE SEQUENCE [MRNA] (ISOFORM 2)</scope>
    <source>
        <tissue>Gastric carcinoma</tissue>
    </source>
</reference>
<reference key="5">
    <citation type="journal article" date="2019" name="Cancer Immunol. Immunother.">
        <title>A secreted PD-L1 splice variant that covalently dimerizes and mediates immunosuppression.</title>
        <authorList>
            <person name="Mahoney K.M."/>
            <person name="Shukla S.A."/>
            <person name="Patsoukis N."/>
            <person name="Chaudhri A."/>
            <person name="Browne E.P."/>
            <person name="Arazi A."/>
            <person name="Eisenhaure T.M."/>
            <person name="Pendergraft W.F. III"/>
            <person name="Hua P."/>
            <person name="Pham H.C."/>
            <person name="Bu X."/>
            <person name="Zhu B."/>
            <person name="Hacohen N."/>
            <person name="Fritsch E.F."/>
            <person name="Boussiotis V.A."/>
            <person name="Wu C.J."/>
            <person name="Freeman G.J."/>
        </authorList>
    </citation>
    <scope>NUCLEOTIDE SEQUENCE [MRNA] (ISOFORM 4)</scope>
    <scope>SUBUNIT (ISOFORM 4)</scope>
    <scope>SUBCELLULAR LOCATION (ISOFORM 4)</scope>
    <scope>TISSUE SPECIFICITY (ISOFORM 4)</scope>
    <scope>MUTAGENESIS OF CYS-238 (ISOFORM 4)</scope>
    <source>
        <tissue>Placenta</tissue>
    </source>
</reference>
<reference key="6">
    <citation type="journal article" date="2004" name="Nat. Genet.">
        <title>Complete sequencing and characterization of 21,243 full-length human cDNAs.</title>
        <authorList>
            <person name="Ota T."/>
            <person name="Suzuki Y."/>
            <person name="Nishikawa T."/>
            <person name="Otsuki T."/>
            <person name="Sugiyama T."/>
            <person name="Irie R."/>
            <person name="Wakamatsu A."/>
            <person name="Hayashi K."/>
            <person name="Sato H."/>
            <person name="Nagai K."/>
            <person name="Kimura K."/>
            <person name="Makita H."/>
            <person name="Sekine M."/>
            <person name="Obayashi M."/>
            <person name="Nishi T."/>
            <person name="Shibahara T."/>
            <person name="Tanaka T."/>
            <person name="Ishii S."/>
            <person name="Yamamoto J."/>
            <person name="Saito K."/>
            <person name="Kawai Y."/>
            <person name="Isono Y."/>
            <person name="Nakamura Y."/>
            <person name="Nagahari K."/>
            <person name="Murakami K."/>
            <person name="Yasuda T."/>
            <person name="Iwayanagi T."/>
            <person name="Wagatsuma M."/>
            <person name="Shiratori A."/>
            <person name="Sudo H."/>
            <person name="Hosoiri T."/>
            <person name="Kaku Y."/>
            <person name="Kodaira H."/>
            <person name="Kondo H."/>
            <person name="Sugawara M."/>
            <person name="Takahashi M."/>
            <person name="Kanda K."/>
            <person name="Yokoi T."/>
            <person name="Furuya T."/>
            <person name="Kikkawa E."/>
            <person name="Omura Y."/>
            <person name="Abe K."/>
            <person name="Kamihara K."/>
            <person name="Katsuta N."/>
            <person name="Sato K."/>
            <person name="Tanikawa M."/>
            <person name="Yamazaki M."/>
            <person name="Ninomiya K."/>
            <person name="Ishibashi T."/>
            <person name="Yamashita H."/>
            <person name="Murakawa K."/>
            <person name="Fujimori K."/>
            <person name="Tanai H."/>
            <person name="Kimata M."/>
            <person name="Watanabe M."/>
            <person name="Hiraoka S."/>
            <person name="Chiba Y."/>
            <person name="Ishida S."/>
            <person name="Ono Y."/>
            <person name="Takiguchi S."/>
            <person name="Watanabe S."/>
            <person name="Yosida M."/>
            <person name="Hotuta T."/>
            <person name="Kusano J."/>
            <person name="Kanehori K."/>
            <person name="Takahashi-Fujii A."/>
            <person name="Hara H."/>
            <person name="Tanase T.-O."/>
            <person name="Nomura Y."/>
            <person name="Togiya S."/>
            <person name="Komai F."/>
            <person name="Hara R."/>
            <person name="Takeuchi K."/>
            <person name="Arita M."/>
            <person name="Imose N."/>
            <person name="Musashino K."/>
            <person name="Yuuki H."/>
            <person name="Oshima A."/>
            <person name="Sasaki N."/>
            <person name="Aotsuka S."/>
            <person name="Yoshikawa Y."/>
            <person name="Matsunawa H."/>
            <person name="Ichihara T."/>
            <person name="Shiohata N."/>
            <person name="Sano S."/>
            <person name="Moriya S."/>
            <person name="Momiyama H."/>
            <person name="Satoh N."/>
            <person name="Takami S."/>
            <person name="Terashima Y."/>
            <person name="Suzuki O."/>
            <person name="Nakagawa S."/>
            <person name="Senoh A."/>
            <person name="Mizoguchi H."/>
            <person name="Goto Y."/>
            <person name="Shimizu F."/>
            <person name="Wakebe H."/>
            <person name="Hishigaki H."/>
            <person name="Watanabe T."/>
            <person name="Sugiyama A."/>
            <person name="Takemoto M."/>
            <person name="Kawakami B."/>
            <person name="Yamazaki M."/>
            <person name="Watanabe K."/>
            <person name="Kumagai A."/>
            <person name="Itakura S."/>
            <person name="Fukuzumi Y."/>
            <person name="Fujimori Y."/>
            <person name="Komiyama M."/>
            <person name="Tashiro H."/>
            <person name="Tanigami A."/>
            <person name="Fujiwara T."/>
            <person name="Ono T."/>
            <person name="Yamada K."/>
            <person name="Fujii Y."/>
            <person name="Ozaki K."/>
            <person name="Hirao M."/>
            <person name="Ohmori Y."/>
            <person name="Kawabata A."/>
            <person name="Hikiji T."/>
            <person name="Kobatake N."/>
            <person name="Inagaki H."/>
            <person name="Ikema Y."/>
            <person name="Okamoto S."/>
            <person name="Okitani R."/>
            <person name="Kawakami T."/>
            <person name="Noguchi S."/>
            <person name="Itoh T."/>
            <person name="Shigeta K."/>
            <person name="Senba T."/>
            <person name="Matsumura K."/>
            <person name="Nakajima Y."/>
            <person name="Mizuno T."/>
            <person name="Morinaga M."/>
            <person name="Sasaki M."/>
            <person name="Togashi T."/>
            <person name="Oyama M."/>
            <person name="Hata H."/>
            <person name="Watanabe M."/>
            <person name="Komatsu T."/>
            <person name="Mizushima-Sugano J."/>
            <person name="Satoh T."/>
            <person name="Shirai Y."/>
            <person name="Takahashi Y."/>
            <person name="Nakagawa K."/>
            <person name="Okumura K."/>
            <person name="Nagase T."/>
            <person name="Nomura N."/>
            <person name="Kikuchi H."/>
            <person name="Masuho Y."/>
            <person name="Yamashita R."/>
            <person name="Nakai K."/>
            <person name="Yada T."/>
            <person name="Nakamura Y."/>
            <person name="Ohara O."/>
            <person name="Isogai T."/>
            <person name="Sugano S."/>
        </authorList>
    </citation>
    <scope>NUCLEOTIDE SEQUENCE [LARGE SCALE MRNA] (ISOFORMS 1 AND 3)</scope>
    <source>
        <tissue>Placenta</tissue>
    </source>
</reference>
<reference key="7">
    <citation type="journal article" date="2004" name="Nature">
        <title>DNA sequence and analysis of human chromosome 9.</title>
        <authorList>
            <person name="Humphray S.J."/>
            <person name="Oliver K."/>
            <person name="Hunt A.R."/>
            <person name="Plumb R.W."/>
            <person name="Loveland J.E."/>
            <person name="Howe K.L."/>
            <person name="Andrews T.D."/>
            <person name="Searle S."/>
            <person name="Hunt S.E."/>
            <person name="Scott C.E."/>
            <person name="Jones M.C."/>
            <person name="Ainscough R."/>
            <person name="Almeida J.P."/>
            <person name="Ambrose K.D."/>
            <person name="Ashwell R.I.S."/>
            <person name="Babbage A.K."/>
            <person name="Babbage S."/>
            <person name="Bagguley C.L."/>
            <person name="Bailey J."/>
            <person name="Banerjee R."/>
            <person name="Barker D.J."/>
            <person name="Barlow K.F."/>
            <person name="Bates K."/>
            <person name="Beasley H."/>
            <person name="Beasley O."/>
            <person name="Bird C.P."/>
            <person name="Bray-Allen S."/>
            <person name="Brown A.J."/>
            <person name="Brown J.Y."/>
            <person name="Burford D."/>
            <person name="Burrill W."/>
            <person name="Burton J."/>
            <person name="Carder C."/>
            <person name="Carter N.P."/>
            <person name="Chapman J.C."/>
            <person name="Chen Y."/>
            <person name="Clarke G."/>
            <person name="Clark S.Y."/>
            <person name="Clee C.M."/>
            <person name="Clegg S."/>
            <person name="Collier R.E."/>
            <person name="Corby N."/>
            <person name="Crosier M."/>
            <person name="Cummings A.T."/>
            <person name="Davies J."/>
            <person name="Dhami P."/>
            <person name="Dunn M."/>
            <person name="Dutta I."/>
            <person name="Dyer L.W."/>
            <person name="Earthrowl M.E."/>
            <person name="Faulkner L."/>
            <person name="Fleming C.J."/>
            <person name="Frankish A."/>
            <person name="Frankland J.A."/>
            <person name="French L."/>
            <person name="Fricker D.G."/>
            <person name="Garner P."/>
            <person name="Garnett J."/>
            <person name="Ghori J."/>
            <person name="Gilbert J.G.R."/>
            <person name="Glison C."/>
            <person name="Grafham D.V."/>
            <person name="Gribble S."/>
            <person name="Griffiths C."/>
            <person name="Griffiths-Jones S."/>
            <person name="Grocock R."/>
            <person name="Guy J."/>
            <person name="Hall R.E."/>
            <person name="Hammond S."/>
            <person name="Harley J.L."/>
            <person name="Harrison E.S.I."/>
            <person name="Hart E.A."/>
            <person name="Heath P.D."/>
            <person name="Henderson C.D."/>
            <person name="Hopkins B.L."/>
            <person name="Howard P.J."/>
            <person name="Howden P.J."/>
            <person name="Huckle E."/>
            <person name="Johnson C."/>
            <person name="Johnson D."/>
            <person name="Joy A.A."/>
            <person name="Kay M."/>
            <person name="Keenan S."/>
            <person name="Kershaw J.K."/>
            <person name="Kimberley A.M."/>
            <person name="King A."/>
            <person name="Knights A."/>
            <person name="Laird G.K."/>
            <person name="Langford C."/>
            <person name="Lawlor S."/>
            <person name="Leongamornlert D.A."/>
            <person name="Leversha M."/>
            <person name="Lloyd C."/>
            <person name="Lloyd D.M."/>
            <person name="Lovell J."/>
            <person name="Martin S."/>
            <person name="Mashreghi-Mohammadi M."/>
            <person name="Matthews L."/>
            <person name="McLaren S."/>
            <person name="McLay K.E."/>
            <person name="McMurray A."/>
            <person name="Milne S."/>
            <person name="Nickerson T."/>
            <person name="Nisbett J."/>
            <person name="Nordsiek G."/>
            <person name="Pearce A.V."/>
            <person name="Peck A.I."/>
            <person name="Porter K.M."/>
            <person name="Pandian R."/>
            <person name="Pelan S."/>
            <person name="Phillimore B."/>
            <person name="Povey S."/>
            <person name="Ramsey Y."/>
            <person name="Rand V."/>
            <person name="Scharfe M."/>
            <person name="Sehra H.K."/>
            <person name="Shownkeen R."/>
            <person name="Sims S.K."/>
            <person name="Skuce C.D."/>
            <person name="Smith M."/>
            <person name="Steward C.A."/>
            <person name="Swarbreck D."/>
            <person name="Sycamore N."/>
            <person name="Tester J."/>
            <person name="Thorpe A."/>
            <person name="Tracey A."/>
            <person name="Tromans A."/>
            <person name="Thomas D.W."/>
            <person name="Wall M."/>
            <person name="Wallis J.M."/>
            <person name="West A.P."/>
            <person name="Whitehead S.L."/>
            <person name="Willey D.L."/>
            <person name="Williams S.A."/>
            <person name="Wilming L."/>
            <person name="Wray P.W."/>
            <person name="Young L."/>
            <person name="Ashurst J.L."/>
            <person name="Coulson A."/>
            <person name="Blocker H."/>
            <person name="Durbin R.M."/>
            <person name="Sulston J.E."/>
            <person name="Hubbard T."/>
            <person name="Jackson M.J."/>
            <person name="Bentley D.R."/>
            <person name="Beck S."/>
            <person name="Rogers J."/>
            <person name="Dunham I."/>
        </authorList>
    </citation>
    <scope>NUCLEOTIDE SEQUENCE [LARGE SCALE GENOMIC DNA]</scope>
</reference>
<reference key="8">
    <citation type="submission" date="2005-09" db="EMBL/GenBank/DDBJ databases">
        <authorList>
            <person name="Mural R.J."/>
            <person name="Istrail S."/>
            <person name="Sutton G.G."/>
            <person name="Florea L."/>
            <person name="Halpern A.L."/>
            <person name="Mobarry C.M."/>
            <person name="Lippert R."/>
            <person name="Walenz B."/>
            <person name="Shatkay H."/>
            <person name="Dew I."/>
            <person name="Miller J.R."/>
            <person name="Flanigan M.J."/>
            <person name="Edwards N.J."/>
            <person name="Bolanos R."/>
            <person name="Fasulo D."/>
            <person name="Halldorsson B.V."/>
            <person name="Hannenhalli S."/>
            <person name="Turner R."/>
            <person name="Yooseph S."/>
            <person name="Lu F."/>
            <person name="Nusskern D.R."/>
            <person name="Shue B.C."/>
            <person name="Zheng X.H."/>
            <person name="Zhong F."/>
            <person name="Delcher A.L."/>
            <person name="Huson D.H."/>
            <person name="Kravitz S.A."/>
            <person name="Mouchard L."/>
            <person name="Reinert K."/>
            <person name="Remington K.A."/>
            <person name="Clark A.G."/>
            <person name="Waterman M.S."/>
            <person name="Eichler E.E."/>
            <person name="Adams M.D."/>
            <person name="Hunkapiller M.W."/>
            <person name="Myers E.W."/>
            <person name="Venter J.C."/>
        </authorList>
    </citation>
    <scope>NUCLEOTIDE SEQUENCE [LARGE SCALE GENOMIC DNA]</scope>
</reference>
<reference key="9">
    <citation type="journal article" date="2004" name="Genome Res.">
        <title>The status, quality, and expansion of the NIH full-length cDNA project: the Mammalian Gene Collection (MGC).</title>
        <authorList>
            <consortium name="The MGC Project Team"/>
        </authorList>
    </citation>
    <scope>NUCLEOTIDE SEQUENCE [LARGE SCALE MRNA] (ISOFORM 1)</scope>
    <source>
        <tissue>Lung</tissue>
    </source>
</reference>
<reference key="10">
    <citation type="journal article" date="2009" name="J. Proteome Res.">
        <title>Glycoproteomics analysis of human liver tissue by combination of multiple enzyme digestion and hydrazide chemistry.</title>
        <authorList>
            <person name="Chen R."/>
            <person name="Jiang X."/>
            <person name="Sun D."/>
            <person name="Han G."/>
            <person name="Wang F."/>
            <person name="Ye M."/>
            <person name="Wang L."/>
            <person name="Zou H."/>
        </authorList>
    </citation>
    <scope>GLYCOSYLATION [LARGE SCALE ANALYSIS] AT ASN-192</scope>
    <source>
        <tissue>Liver</tissue>
    </source>
</reference>
<reference key="11">
    <citation type="journal article" date="2017" name="Nature">
        <title>CMTM6 maintains the expression of PD-L1 and regulates anti-tumour immunity.</title>
        <authorList>
            <person name="Burr M.L."/>
            <person name="Sparbier C.E."/>
            <person name="Chan Y.C."/>
            <person name="Williamson J.C."/>
            <person name="Woods K."/>
            <person name="Beavis P.A."/>
            <person name="Lam E.Y.N."/>
            <person name="Henderson M.A."/>
            <person name="Bell C.C."/>
            <person name="Stolzenburg S."/>
            <person name="Gilan O."/>
            <person name="Bloor S."/>
            <person name="Noori T."/>
            <person name="Morgens D.W."/>
            <person name="Bassik M.C."/>
            <person name="Neeson P.J."/>
            <person name="Behren A."/>
            <person name="Darcy P.K."/>
            <person name="Dawson S.J."/>
            <person name="Voskoboinik I."/>
            <person name="Trapani J.A."/>
            <person name="Cebon J."/>
            <person name="Lehner P.J."/>
            <person name="Dawson M.A."/>
        </authorList>
    </citation>
    <scope>FUNCTION</scope>
    <scope>SUBCELLULAR LOCATION</scope>
    <scope>INTERACTION WITH CMTM6</scope>
    <scope>IDENTIFICATION BY MASS SPECTROMETRY</scope>
</reference>
<reference key="12">
    <citation type="journal article" date="2016" name="Nature">
        <title>Aberrant PD-L1 expression through 3'-UTR disruption in multiple cancers.</title>
        <authorList>
            <person name="Kataoka K."/>
            <person name="Shiraishi Y."/>
            <person name="Takeda Y."/>
            <person name="Sakata S."/>
            <person name="Matsumoto M."/>
            <person name="Nagano S."/>
            <person name="Maeda T."/>
            <person name="Nagata Y."/>
            <person name="Kitanaka A."/>
            <person name="Mizuno S."/>
            <person name="Tanaka H."/>
            <person name="Chiba K."/>
            <person name="Ito S."/>
            <person name="Watatani Y."/>
            <person name="Kakiuchi N."/>
            <person name="Suzuki H."/>
            <person name="Yoshizato T."/>
            <person name="Yoshida K."/>
            <person name="Sanada M."/>
            <person name="Itonaga H."/>
            <person name="Imaizumi Y."/>
            <person name="Totoki Y."/>
            <person name="Munakata W."/>
            <person name="Nakamura H."/>
            <person name="Hama N."/>
            <person name="Shide K."/>
            <person name="Kubuki Y."/>
            <person name="Hidaka T."/>
            <person name="Kameda T."/>
            <person name="Masuda K."/>
            <person name="Minato N."/>
            <person name="Kashiwase K."/>
            <person name="Izutsu K."/>
            <person name="Takaori-Kondo A."/>
            <person name="Miyazaki Y."/>
            <person name="Takahashi S."/>
            <person name="Shibata T."/>
            <person name="Kawamoto H."/>
            <person name="Akatsuka Y."/>
            <person name="Shimoda K."/>
            <person name="Takeuchi K."/>
            <person name="Seya T."/>
            <person name="Miyano S."/>
            <person name="Ogawa S."/>
        </authorList>
    </citation>
    <scope>INVOLVEMENT IN CANCERS</scope>
</reference>
<reference key="13">
    <citation type="journal article" date="2017" name="Nature">
        <title>Identification of CMTM6 and CMTM4 as PD-L1 protein regulators.</title>
        <authorList>
            <person name="Mezzadra R."/>
            <person name="Sun C."/>
            <person name="Jae L.T."/>
            <person name="Gomez-Eerland R."/>
            <person name="de Vries E."/>
            <person name="Wu W."/>
            <person name="Logtenberg M.E.W."/>
            <person name="Slagter M."/>
            <person name="Rozeman E.A."/>
            <person name="Hofland I."/>
            <person name="Broeks A."/>
            <person name="Horlings H.M."/>
            <person name="Wessels L.F.A."/>
            <person name="Blank C.U."/>
            <person name="Xiao Y."/>
            <person name="Heck A.J.R."/>
            <person name="Borst J."/>
            <person name="Brummelkamp T.R."/>
            <person name="Schumacher T.N.M."/>
        </authorList>
    </citation>
    <scope>FUNCTION</scope>
    <scope>INDUCTION BY IFNG</scope>
    <scope>SUBCELLULAR LOCATION</scope>
    <scope>INTERACTION WITH CMTM4 AND CMTM6</scope>
    <scope>IDENTIFICATION BY MASS SPECTROMETRY</scope>
    <scope>UBIQUITINATION</scope>
</reference>
<reference key="14">
    <citation type="journal article" date="2019" name="Cancer Immunol. Res.">
        <title>USP22 Deubiquitinates CD274 to Suppress Anticancer Immunity.</title>
        <authorList>
            <person name="Huang X."/>
            <person name="Zhang Q."/>
            <person name="Lou Y."/>
            <person name="Wang J."/>
            <person name="Zhao X."/>
            <person name="Wang L."/>
            <person name="Zhang X."/>
            <person name="Li S."/>
            <person name="Zhao Y."/>
            <person name="Chen Q."/>
            <person name="Liang T."/>
            <person name="Bai X."/>
        </authorList>
    </citation>
    <scope>FUNCTION</scope>
    <scope>DEUBIQUITINATION BY USP22</scope>
</reference>
<reference key="15">
    <citation type="journal article" date="2020" name="Nat. Cell Biol.">
        <title>PD-L1-mediated gasdermin C expression switches apoptosis to pyroptosis in cancer cells and facilitates tumour necrosis.</title>
        <authorList>
            <person name="Hou J."/>
            <person name="Zhao R."/>
            <person name="Xia W."/>
            <person name="Chang C.W."/>
            <person name="You Y."/>
            <person name="Hsu J.M."/>
            <person name="Nie L."/>
            <person name="Chen Y."/>
            <person name="Wang Y.C."/>
            <person name="Liu C."/>
            <person name="Wang W.J."/>
            <person name="Wu Y."/>
            <person name="Ke B."/>
            <person name="Hsu J.L."/>
            <person name="Huang K."/>
            <person name="Ye Z."/>
            <person name="Yang Y."/>
            <person name="Xia X."/>
            <person name="Li Y."/>
            <person name="Li C.W."/>
            <person name="Shao B."/>
            <person name="Tainer J.A."/>
            <person name="Hung M.C."/>
        </authorList>
    </citation>
    <scope>FUNCTION</scope>
    <scope>INTERACTION WITH STAT3</scope>
    <scope>SUBCELLULAR LOCATION</scope>
</reference>
<reference key="16">
    <citation type="journal article" date="2021" name="Mol. Cancer Res.">
        <title>Membrane-Associated RING-CH 8 Functions as a Novel PD-L1 E3 Ligase to Mediate PD-L1 Degradation Induced by EGFR Inhibitors.</title>
        <authorList>
            <person name="Qian G."/>
            <person name="Guo J."/>
            <person name="Vallega K.A."/>
            <person name="Hu C."/>
            <person name="Chen Z."/>
            <person name="Deng Y."/>
            <person name="Wang Q."/>
            <person name="Fan S."/>
            <person name="Ramalingam S.S."/>
            <person name="Owonikoko T.K."/>
            <person name="Wei W."/>
            <person name="Sun S.Y."/>
        </authorList>
    </citation>
    <scope>UBIQUITINATION BY MARCHF8</scope>
</reference>
<reference key="17">
    <citation type="journal article" date="2022" name="Int. J. Mol. Sci.">
        <title>PAUF Induces Migration of Human Pancreatic Cancer Cells Exclusively via the TLR4/MyD88/NF-kappaB Signaling Pathway.</title>
        <authorList>
            <person name="Youn S.E."/>
            <person name="Jiang F."/>
            <person name="Won H.Y."/>
            <person name="Hong D.E."/>
            <person name="Kang T.H."/>
            <person name="Park Y.Y."/>
            <person name="Koh S.S."/>
        </authorList>
    </citation>
    <scope>SUBCELLULAR LOCATION</scope>
</reference>
<reference key="18">
    <citation type="journal article" date="2023" name="EMBO J.">
        <title>The CTLA-4 immune checkpoint protein regulates PD-L1:PD-1 interaction via transendocytosis of its ligand CD80.</title>
        <authorList>
            <person name="Kennedy A."/>
            <person name="Robinson M.A."/>
            <person name="Hinze C."/>
            <person name="Waters E."/>
            <person name="Williams C."/>
            <person name="Halliday N."/>
            <person name="Dovedi S."/>
            <person name="Sansom D.M."/>
        </authorList>
    </citation>
    <scope>FUNCTION</scope>
    <scope>INTERACTION WITH CD80</scope>
</reference>
<reference key="19">
    <citation type="journal article" date="2008" name="Proc. Natl. Acad. Sci. U.S.A.">
        <title>The PD-1/PD-L1 complex resembles the antigen-binding Fv domains of antibodies and T cell receptors.</title>
        <authorList>
            <person name="Lin D.Y."/>
            <person name="Tanaka Y."/>
            <person name="Iwasaki M."/>
            <person name="Gittis A.G."/>
            <person name="Su H.P."/>
            <person name="Mikami B."/>
            <person name="Okazaki T."/>
            <person name="Honjo T."/>
            <person name="Minato N."/>
            <person name="Garboczi D.N."/>
        </authorList>
    </citation>
    <scope>X-RAY CRYSTALLOGRAPHY (2.64 ANGSTROMS) OF 18-239 IN COMPLEX WITH MOUSE PDCD1</scope>
    <scope>DISULFIDE BONDS</scope>
</reference>
<reference evidence="29 30" key="20">
    <citation type="journal article" date="2015" name="Structure">
        <title>Structure of the complex of human programmed death 1, PD-1, and its ligand PD-L1.</title>
        <authorList>
            <person name="Zak K.M."/>
            <person name="Kitel R."/>
            <person name="Przetocka S."/>
            <person name="Golik P."/>
            <person name="Guzik K."/>
            <person name="Musielak B."/>
            <person name="Domling A."/>
            <person name="Dubin G."/>
            <person name="Holak T.A."/>
        </authorList>
    </citation>
    <scope>X-RAY CRYSTALLOGRAPHY (1.80 ANGSTROMS) OF 18-134 IN COMPLEX WITH PDCD1</scope>
    <scope>DISULFIDE BOND</scope>
</reference>
<sequence>MRIFAVFIFMTYWHLLNAFTVTVPKDLYVVEYGSNMTIECKFPVEKQLDLAALIVYWEMEDKNIIQFVHGEEDLKVQHSSYRQRARLLKDQLSLGNAALQITDVKLQDAGVYRCMISYGGADYKRITVKVNAPYNKINQRILVVDPVTSEHELTCQAEGYPKAEVIWTSSDHQVLSGKTTTTNSKREEKLFNVTSTLRINTTTNEIFYCTFRRLDPEENHTAELVIPELPLAHPPNERTHLVILGAILLCLGVALTFIFRLRKGRMMDVKKCGIQDTNSKKQSDTHLEET</sequence>
<organism>
    <name type="scientific">Homo sapiens</name>
    <name type="common">Human</name>
    <dbReference type="NCBI Taxonomy" id="9606"/>
    <lineage>
        <taxon>Eukaryota</taxon>
        <taxon>Metazoa</taxon>
        <taxon>Chordata</taxon>
        <taxon>Craniata</taxon>
        <taxon>Vertebrata</taxon>
        <taxon>Euteleostomi</taxon>
        <taxon>Mammalia</taxon>
        <taxon>Eutheria</taxon>
        <taxon>Euarchontoglires</taxon>
        <taxon>Primates</taxon>
        <taxon>Haplorrhini</taxon>
        <taxon>Catarrhini</taxon>
        <taxon>Hominidae</taxon>
        <taxon>Homo</taxon>
    </lineage>
</organism>
<feature type="signal peptide" evidence="2">
    <location>
        <begin position="1"/>
        <end position="18"/>
    </location>
</feature>
<feature type="chain" id="PRO_0000014553" description="Programmed cell death 1 ligand 1">
    <location>
        <begin position="19"/>
        <end position="290"/>
    </location>
</feature>
<feature type="topological domain" description="Extracellular" evidence="2">
    <location>
        <begin position="19"/>
        <end position="238"/>
    </location>
</feature>
<feature type="transmembrane region" description="Helical" evidence="2">
    <location>
        <begin position="239"/>
        <end position="259"/>
    </location>
</feature>
<feature type="topological domain" description="Cytoplasmic" evidence="2">
    <location>
        <begin position="260"/>
        <end position="290"/>
    </location>
</feature>
<feature type="domain" description="Ig-like V-type">
    <location>
        <begin position="19"/>
        <end position="127"/>
    </location>
</feature>
<feature type="domain" description="Ig-like C2-type">
    <location>
        <begin position="133"/>
        <end position="225"/>
    </location>
</feature>
<feature type="glycosylation site" description="N-linked (GlcNAc...) asparagine" evidence="2">
    <location>
        <position position="35"/>
    </location>
</feature>
<feature type="glycosylation site" description="N-linked (GlcNAc...) asparagine" evidence="8">
    <location>
        <position position="192"/>
    </location>
</feature>
<feature type="glycosylation site" description="N-linked (GlcNAc...) asparagine" evidence="2">
    <location>
        <position position="200"/>
    </location>
</feature>
<feature type="glycosylation site" description="N-linked (GlcNAc...) asparagine" evidence="2">
    <location>
        <position position="219"/>
    </location>
</feature>
<feature type="disulfide bond" evidence="3 7 9">
    <location>
        <begin position="40"/>
        <end position="114"/>
    </location>
</feature>
<feature type="disulfide bond" evidence="3 7">
    <location>
        <begin position="155"/>
        <end position="209"/>
    </location>
</feature>
<feature type="splice variant" id="VSP_013735" description="In isoform 2." evidence="21 26">
    <location>
        <begin position="19"/>
        <end position="132"/>
    </location>
</feature>
<feature type="splice variant" id="VSP_013736" description="In isoform 3." evidence="20 21">
    <original>K</original>
    <variation>D</variation>
    <location>
        <position position="178"/>
    </location>
</feature>
<feature type="splice variant" id="VSP_013737" description="In isoform 3." evidence="20 21">
    <location>
        <begin position="179"/>
        <end position="290"/>
    </location>
</feature>
<feature type="splice variant" id="VSP_061953" description="In isoform 4." evidence="13">
    <original>ELPLAHPPNERTHLVILGAILLCLGVALTFIFRLRKGRMMDVKKCGIQDTNSKKQSDTHLEE</original>
    <variation>GNILNVSIKICLTLSPS</variation>
    <location>
        <begin position="228"/>
        <end position="289"/>
    </location>
</feature>
<feature type="strand" evidence="33">
    <location>
        <begin position="26"/>
        <end position="31"/>
    </location>
</feature>
<feature type="strand" evidence="33">
    <location>
        <begin position="36"/>
        <end position="41"/>
    </location>
</feature>
<feature type="strand" evidence="32">
    <location>
        <begin position="45"/>
        <end position="47"/>
    </location>
</feature>
<feature type="helix" evidence="33">
    <location>
        <begin position="50"/>
        <end position="52"/>
    </location>
</feature>
<feature type="strand" evidence="33">
    <location>
        <begin position="54"/>
        <end position="59"/>
    </location>
</feature>
<feature type="strand" evidence="33">
    <location>
        <begin position="62"/>
        <end position="68"/>
    </location>
</feature>
<feature type="strand" evidence="35">
    <location>
        <begin position="71"/>
        <end position="73"/>
    </location>
</feature>
<feature type="helix" evidence="33">
    <location>
        <begin position="74"/>
        <end position="76"/>
    </location>
</feature>
<feature type="helix" evidence="33">
    <location>
        <begin position="79"/>
        <end position="81"/>
    </location>
</feature>
<feature type="turn" evidence="33">
    <location>
        <begin position="82"/>
        <end position="84"/>
    </location>
</feature>
<feature type="strand" evidence="33">
    <location>
        <begin position="85"/>
        <end position="87"/>
    </location>
</feature>
<feature type="helix" evidence="33">
    <location>
        <begin position="89"/>
        <end position="94"/>
    </location>
</feature>
<feature type="strand" evidence="33">
    <location>
        <begin position="96"/>
        <end position="103"/>
    </location>
</feature>
<feature type="helix" evidence="33">
    <location>
        <begin position="106"/>
        <end position="108"/>
    </location>
</feature>
<feature type="strand" evidence="33">
    <location>
        <begin position="110"/>
        <end position="131"/>
    </location>
</feature>
<feature type="strand" evidence="31">
    <location>
        <begin position="138"/>
        <end position="145"/>
    </location>
</feature>
<feature type="turn" evidence="31">
    <location>
        <begin position="146"/>
        <end position="149"/>
    </location>
</feature>
<feature type="strand" evidence="31">
    <location>
        <begin position="150"/>
        <end position="161"/>
    </location>
</feature>
<feature type="strand" evidence="31">
    <location>
        <begin position="164"/>
        <end position="169"/>
    </location>
</feature>
<feature type="strand" evidence="31">
    <location>
        <begin position="177"/>
        <end position="183"/>
    </location>
</feature>
<feature type="strand" evidence="31">
    <location>
        <begin position="185"/>
        <end position="187"/>
    </location>
</feature>
<feature type="strand" evidence="31">
    <location>
        <begin position="191"/>
        <end position="200"/>
    </location>
</feature>
<feature type="strand" evidence="31">
    <location>
        <begin position="206"/>
        <end position="213"/>
    </location>
</feature>
<feature type="turn" evidence="31">
    <location>
        <begin position="214"/>
        <end position="217"/>
    </location>
</feature>
<feature type="strand" evidence="31">
    <location>
        <begin position="218"/>
        <end position="225"/>
    </location>
</feature>
<feature type="helix" evidence="36">
    <location>
        <begin position="237"/>
        <end position="265"/>
    </location>
</feature>
<feature type="strand" evidence="34">
    <location>
        <begin position="268"/>
        <end position="271"/>
    </location>
</feature>
<feature type="mutagenesis site" description="Largely abrogates multimerization, in vitro." evidence="13">
    <original>C</original>
    <variation>S</variation>
    <location sequence="Q9NZQ7-4">
        <position position="238"/>
    </location>
</feature>
<gene>
    <name evidence="28" type="primary">CD274</name>
    <name type="synonym">B7H1</name>
    <name type="synonym">PDCD1L1</name>
    <name type="synonym">PDCD1LG1</name>
    <name type="synonym">PDL1</name>
</gene>
<dbReference type="EMBL" id="AF177937">
    <property type="protein sequence ID" value="AAF25807.1"/>
    <property type="molecule type" value="mRNA"/>
</dbReference>
<dbReference type="EMBL" id="AF233516">
    <property type="protein sequence ID" value="AAG18508.1"/>
    <property type="molecule type" value="mRNA"/>
</dbReference>
<dbReference type="EMBL" id="AY254342">
    <property type="protein sequence ID" value="AAP13470.1"/>
    <property type="molecule type" value="mRNA"/>
</dbReference>
<dbReference type="EMBL" id="AY291313">
    <property type="protein sequence ID" value="AAP42144.1"/>
    <property type="molecule type" value="mRNA"/>
</dbReference>
<dbReference type="EMBL" id="AY714881">
    <property type="protein sequence ID" value="AAU09634.1"/>
    <property type="molecule type" value="mRNA"/>
</dbReference>
<dbReference type="EMBL" id="DQ286582">
    <property type="protein sequence ID" value="ABB90152.1"/>
    <property type="molecule type" value="mRNA"/>
</dbReference>
<dbReference type="EMBL" id="AK001894">
    <property type="protein sequence ID" value="BAA91966.1"/>
    <property type="status" value="ALT_INIT"/>
    <property type="molecule type" value="mRNA"/>
</dbReference>
<dbReference type="EMBL" id="AK300470">
    <property type="protein sequence ID" value="BAG62189.1"/>
    <property type="molecule type" value="mRNA"/>
</dbReference>
<dbReference type="EMBL" id="AK314567">
    <property type="protein sequence ID" value="BAG37149.1"/>
    <property type="molecule type" value="mRNA"/>
</dbReference>
<dbReference type="EMBL" id="AL162253">
    <property type="status" value="NOT_ANNOTATED_CDS"/>
    <property type="molecule type" value="Genomic_DNA"/>
</dbReference>
<dbReference type="EMBL" id="CH471071">
    <property type="protein sequence ID" value="EAW58763.1"/>
    <property type="molecule type" value="Genomic_DNA"/>
</dbReference>
<dbReference type="EMBL" id="BC069381">
    <property type="protein sequence ID" value="AAH69381.1"/>
    <property type="molecule type" value="mRNA"/>
</dbReference>
<dbReference type="EMBL" id="BC074984">
    <property type="protein sequence ID" value="AAH74984.1"/>
    <property type="molecule type" value="mRNA"/>
</dbReference>
<dbReference type="EMBL" id="BC113734">
    <property type="protein sequence ID" value="AAI13735.1"/>
    <property type="molecule type" value="mRNA"/>
</dbReference>
<dbReference type="EMBL" id="BC113736">
    <property type="protein sequence ID" value="AAI13737.1"/>
    <property type="molecule type" value="mRNA"/>
</dbReference>
<dbReference type="CCDS" id="CCDS59118.1">
    <molecule id="Q9NZQ7-2"/>
</dbReference>
<dbReference type="CCDS" id="CCDS6464.1">
    <molecule id="Q9NZQ7-1"/>
</dbReference>
<dbReference type="RefSeq" id="NP_001254635.1">
    <molecule id="Q9NZQ7-2"/>
    <property type="nucleotide sequence ID" value="NM_001267706.2"/>
</dbReference>
<dbReference type="RefSeq" id="NP_001300958.1">
    <molecule id="Q9NZQ7-4"/>
    <property type="nucleotide sequence ID" value="NM_001314029.2"/>
</dbReference>
<dbReference type="RefSeq" id="NP_054862.1">
    <molecule id="Q9NZQ7-1"/>
    <property type="nucleotide sequence ID" value="NM_014143.4"/>
</dbReference>
<dbReference type="PDB" id="3BIK">
    <property type="method" value="X-ray"/>
    <property type="resolution" value="2.65 A"/>
    <property type="chains" value="A=18-239"/>
</dbReference>
<dbReference type="PDB" id="3BIS">
    <property type="method" value="X-ray"/>
    <property type="resolution" value="2.64 A"/>
    <property type="chains" value="A/B=18-239"/>
</dbReference>
<dbReference type="PDB" id="3FN3">
    <property type="method" value="X-ray"/>
    <property type="resolution" value="2.70 A"/>
    <property type="chains" value="A/B=19-238"/>
</dbReference>
<dbReference type="PDB" id="3SBW">
    <property type="method" value="X-ray"/>
    <property type="resolution" value="2.28 A"/>
    <property type="chains" value="C=19-239"/>
</dbReference>
<dbReference type="PDB" id="4Z18">
    <property type="method" value="X-ray"/>
    <property type="resolution" value="1.95 A"/>
    <property type="chains" value="A/B=19-239"/>
</dbReference>
<dbReference type="PDB" id="4ZQK">
    <property type="method" value="X-ray"/>
    <property type="resolution" value="2.45 A"/>
    <property type="chains" value="A=18-132"/>
</dbReference>
<dbReference type="PDB" id="5C3T">
    <property type="method" value="X-ray"/>
    <property type="resolution" value="1.80 A"/>
    <property type="chains" value="A=18-134"/>
</dbReference>
<dbReference type="PDB" id="5GGT">
    <property type="method" value="X-ray"/>
    <property type="resolution" value="2.80 A"/>
    <property type="chains" value="A=18-134"/>
</dbReference>
<dbReference type="PDB" id="5GRJ">
    <property type="method" value="X-ray"/>
    <property type="resolution" value="3.21 A"/>
    <property type="chains" value="A=18-238"/>
</dbReference>
<dbReference type="PDB" id="5IUS">
    <property type="method" value="X-ray"/>
    <property type="resolution" value="2.89 A"/>
    <property type="chains" value="C/D=18-239"/>
</dbReference>
<dbReference type="PDB" id="5J89">
    <property type="method" value="X-ray"/>
    <property type="resolution" value="2.20 A"/>
    <property type="chains" value="A/B/C/D=2-134"/>
</dbReference>
<dbReference type="PDB" id="5J8O">
    <property type="method" value="X-ray"/>
    <property type="resolution" value="2.30 A"/>
    <property type="chains" value="A/B=18-134"/>
</dbReference>
<dbReference type="PDB" id="5JDR">
    <property type="method" value="X-ray"/>
    <property type="resolution" value="2.70 A"/>
    <property type="chains" value="A/B=18-239"/>
</dbReference>
<dbReference type="PDB" id="5JDS">
    <property type="method" value="X-ray"/>
    <property type="resolution" value="1.70 A"/>
    <property type="chains" value="A=18-132"/>
</dbReference>
<dbReference type="PDB" id="5N2D">
    <property type="method" value="X-ray"/>
    <property type="resolution" value="2.35 A"/>
    <property type="chains" value="A/B/C/D=2-134"/>
</dbReference>
<dbReference type="PDB" id="5N2F">
    <property type="method" value="X-ray"/>
    <property type="resolution" value="1.70 A"/>
    <property type="chains" value="A/B=18-134"/>
</dbReference>
<dbReference type="PDB" id="5NIU">
    <property type="method" value="X-ray"/>
    <property type="resolution" value="2.01 A"/>
    <property type="chains" value="A/B/C/D=18-134"/>
</dbReference>
<dbReference type="PDB" id="5O45">
    <property type="method" value="X-ray"/>
    <property type="resolution" value="0.99 A"/>
    <property type="chains" value="A=17-134"/>
</dbReference>
<dbReference type="PDB" id="5O4Y">
    <property type="method" value="X-ray"/>
    <property type="resolution" value="2.30 A"/>
    <property type="chains" value="B/C/E=18-132"/>
</dbReference>
<dbReference type="PDB" id="5X8L">
    <property type="method" value="X-ray"/>
    <property type="resolution" value="3.10 A"/>
    <property type="chains" value="A/B/C/D/E=18-134"/>
</dbReference>
<dbReference type="PDB" id="5X8M">
    <property type="method" value="X-ray"/>
    <property type="resolution" value="2.66 A"/>
    <property type="chains" value="A=18-134"/>
</dbReference>
<dbReference type="PDB" id="5XJ4">
    <property type="method" value="X-ray"/>
    <property type="resolution" value="2.30 A"/>
    <property type="chains" value="A=19-238"/>
</dbReference>
<dbReference type="PDB" id="5XXY">
    <property type="method" value="X-ray"/>
    <property type="resolution" value="2.90 A"/>
    <property type="chains" value="A=18-133"/>
</dbReference>
<dbReference type="PDB" id="6L8R">
    <property type="method" value="NMR"/>
    <property type="chains" value="A=260-290"/>
</dbReference>
<dbReference type="PDB" id="6NM7">
    <property type="method" value="X-ray"/>
    <property type="resolution" value="2.43 A"/>
    <property type="chains" value="A/B=19-134"/>
</dbReference>
<dbReference type="PDB" id="6NM8">
    <property type="method" value="X-ray"/>
    <property type="resolution" value="2.79 A"/>
    <property type="chains" value="A/B=19-134"/>
</dbReference>
<dbReference type="PDB" id="6NNV">
    <property type="method" value="X-ray"/>
    <property type="resolution" value="1.92 A"/>
    <property type="chains" value="A/B/C/D=18-134"/>
</dbReference>
<dbReference type="PDB" id="6NOJ">
    <property type="method" value="X-ray"/>
    <property type="resolution" value="2.33 A"/>
    <property type="chains" value="A/B=18-134"/>
</dbReference>
<dbReference type="PDB" id="6NOS">
    <property type="method" value="X-ray"/>
    <property type="resolution" value="2.70 A"/>
    <property type="chains" value="A/B=18-134"/>
</dbReference>
<dbReference type="PDB" id="6NP9">
    <property type="method" value="X-ray"/>
    <property type="resolution" value="1.27 A"/>
    <property type="chains" value="A=18-134"/>
</dbReference>
<dbReference type="PDB" id="6PV9">
    <property type="method" value="X-ray"/>
    <property type="resolution" value="2.00 A"/>
    <property type="chains" value="A=19-239"/>
</dbReference>
<dbReference type="PDB" id="6R3K">
    <property type="method" value="X-ray"/>
    <property type="resolution" value="2.20 A"/>
    <property type="chains" value="A/B/C/D=18-134"/>
</dbReference>
<dbReference type="PDB" id="6RPG">
    <property type="method" value="X-ray"/>
    <property type="resolution" value="2.70 A"/>
    <property type="chains" value="A/B=18-134"/>
</dbReference>
<dbReference type="PDB" id="6VQN">
    <property type="method" value="X-ray"/>
    <property type="resolution" value="2.49 A"/>
    <property type="chains" value="A/B/C=18-134"/>
</dbReference>
<dbReference type="PDB" id="6YCR">
    <property type="method" value="X-ray"/>
    <property type="resolution" value="1.54 A"/>
    <property type="chains" value="A=18-134"/>
</dbReference>
<dbReference type="PDB" id="7BEA">
    <property type="method" value="X-ray"/>
    <property type="resolution" value="2.45 A"/>
    <property type="chains" value="A/B=18-134"/>
</dbReference>
<dbReference type="PDB" id="7C88">
    <property type="method" value="X-ray"/>
    <property type="resolution" value="2.00 A"/>
    <property type="chains" value="C/M=1-136"/>
</dbReference>
<dbReference type="PDB" id="7CZD">
    <property type="method" value="X-ray"/>
    <property type="resolution" value="1.64 A"/>
    <property type="chains" value="B/D=19-134"/>
</dbReference>
<dbReference type="PDB" id="7DCV">
    <property type="method" value="NMR"/>
    <property type="chains" value="A=232-290"/>
</dbReference>
<dbReference type="PDB" id="7DY7">
    <property type="method" value="X-ray"/>
    <property type="resolution" value="2.42 A"/>
    <property type="chains" value="A/B=18-134"/>
</dbReference>
<dbReference type="PDB" id="7NLD">
    <property type="method" value="X-ray"/>
    <property type="resolution" value="2.30 A"/>
    <property type="chains" value="A/B/C/D/E/F=18-134"/>
</dbReference>
<dbReference type="PDB" id="7OUN">
    <property type="method" value="X-ray"/>
    <property type="resolution" value="1.90 A"/>
    <property type="chains" value="A=17-134"/>
</dbReference>
<dbReference type="PDB" id="7SJQ">
    <property type="method" value="X-ray"/>
    <property type="resolution" value="2.00 A"/>
    <property type="chains" value="A=18-134"/>
</dbReference>
<dbReference type="PDB" id="7TPS">
    <property type="method" value="X-ray"/>
    <property type="resolution" value="3.15 A"/>
    <property type="chains" value="B/D=19-227"/>
</dbReference>
<dbReference type="PDB" id="7UX5">
    <property type="method" value="X-ray"/>
    <property type="resolution" value="3.35 A"/>
    <property type="chains" value="A/C/E/G/I/K=18-134"/>
</dbReference>
<dbReference type="PDB" id="7UXO">
    <property type="method" value="X-ray"/>
    <property type="resolution" value="2.25 A"/>
    <property type="chains" value="A=18-134"/>
</dbReference>
<dbReference type="PDB" id="7UXP">
    <property type="method" value="X-ray"/>
    <property type="resolution" value="2.62 A"/>
    <property type="chains" value="A/B=18-134"/>
</dbReference>
<dbReference type="PDB" id="7UXQ">
    <property type="method" value="X-ray"/>
    <property type="resolution" value="2.89 A"/>
    <property type="chains" value="A/B=18-134"/>
</dbReference>
<dbReference type="PDB" id="7VUN">
    <property type="method" value="X-ray"/>
    <property type="resolution" value="2.70 A"/>
    <property type="chains" value="A/B/C/D/E/F/G/H=18-134"/>
</dbReference>
<dbReference type="PDB" id="7XAD">
    <property type="method" value="X-ray"/>
    <property type="resolution" value="3.00 A"/>
    <property type="chains" value="A/D/F/H=1-238"/>
</dbReference>
<dbReference type="PDB" id="7XAE">
    <property type="method" value="X-ray"/>
    <property type="resolution" value="3.44 A"/>
    <property type="chains" value="A/B=1-238"/>
</dbReference>
<dbReference type="PDB" id="7XYQ">
    <property type="method" value="X-ray"/>
    <property type="resolution" value="2.85 A"/>
    <property type="chains" value="A=19-225"/>
</dbReference>
<dbReference type="PDB" id="7YDS">
    <property type="method" value="X-ray"/>
    <property type="resolution" value="2.30 A"/>
    <property type="chains" value="A=1-136"/>
</dbReference>
<dbReference type="PDB" id="8ALX">
    <property type="method" value="X-ray"/>
    <property type="resolution" value="1.10 A"/>
    <property type="chains" value="A=18-134"/>
</dbReference>
<dbReference type="PDB" id="8AOK">
    <property type="method" value="X-ray"/>
    <property type="resolution" value="1.60 A"/>
    <property type="chains" value="A=18-134"/>
</dbReference>
<dbReference type="PDB" id="8AOM">
    <property type="method" value="X-ray"/>
    <property type="resolution" value="2.20 A"/>
    <property type="chains" value="A=19-239"/>
</dbReference>
<dbReference type="PDB" id="8JBA">
    <property type="method" value="X-ray"/>
    <property type="resolution" value="2.60 A"/>
    <property type="chains" value="A/B=18-134"/>
</dbReference>
<dbReference type="PDB" id="8K5N">
    <property type="method" value="X-ray"/>
    <property type="resolution" value="2.20 A"/>
    <property type="chains" value="A/B=18-134"/>
</dbReference>
<dbReference type="PDB" id="8OR1">
    <property type="method" value="X-ray"/>
    <property type="resolution" value="3.50 A"/>
    <property type="chains" value="A/B=18-133"/>
</dbReference>
<dbReference type="PDB" id="8P1O">
    <property type="method" value="X-ray"/>
    <property type="resolution" value="2.17 A"/>
    <property type="chains" value="A/B=2-134"/>
</dbReference>
<dbReference type="PDB" id="8R6Q">
    <property type="method" value="X-ray"/>
    <property type="resolution" value="2.17 A"/>
    <property type="chains" value="A/B=18-134"/>
</dbReference>
<dbReference type="PDB" id="8RPB">
    <property type="method" value="X-ray"/>
    <property type="resolution" value="2.79 A"/>
    <property type="chains" value="P=18-133"/>
</dbReference>
<dbReference type="PDB" id="8XR5">
    <property type="method" value="X-ray"/>
    <property type="resolution" value="1.95 A"/>
    <property type="chains" value="A/B=19-134"/>
</dbReference>
<dbReference type="PDB" id="9INU">
    <property type="method" value="X-ray"/>
    <property type="resolution" value="2.70 A"/>
    <property type="chains" value="A/B=18-134"/>
</dbReference>
<dbReference type="PDBsum" id="3BIK"/>
<dbReference type="PDBsum" id="3BIS"/>
<dbReference type="PDBsum" id="3FN3"/>
<dbReference type="PDBsum" id="3SBW"/>
<dbReference type="PDBsum" id="4Z18"/>
<dbReference type="PDBsum" id="4ZQK"/>
<dbReference type="PDBsum" id="5C3T"/>
<dbReference type="PDBsum" id="5GGT"/>
<dbReference type="PDBsum" id="5GRJ"/>
<dbReference type="PDBsum" id="5IUS"/>
<dbReference type="PDBsum" id="5J89"/>
<dbReference type="PDBsum" id="5J8O"/>
<dbReference type="PDBsum" id="5JDR"/>
<dbReference type="PDBsum" id="5JDS"/>
<dbReference type="PDBsum" id="5N2D"/>
<dbReference type="PDBsum" id="5N2F"/>
<dbReference type="PDBsum" id="5NIU"/>
<dbReference type="PDBsum" id="5O45"/>
<dbReference type="PDBsum" id="5O4Y"/>
<dbReference type="PDBsum" id="5X8L"/>
<dbReference type="PDBsum" id="5X8M"/>
<dbReference type="PDBsum" id="5XJ4"/>
<dbReference type="PDBsum" id="5XXY"/>
<dbReference type="PDBsum" id="6L8R"/>
<dbReference type="PDBsum" id="6NM7"/>
<dbReference type="PDBsum" id="6NM8"/>
<dbReference type="PDBsum" id="6NNV"/>
<dbReference type="PDBsum" id="6NOJ"/>
<dbReference type="PDBsum" id="6NOS"/>
<dbReference type="PDBsum" id="6NP9"/>
<dbReference type="PDBsum" id="6PV9"/>
<dbReference type="PDBsum" id="6R3K"/>
<dbReference type="PDBsum" id="6RPG"/>
<dbReference type="PDBsum" id="6VQN"/>
<dbReference type="PDBsum" id="6YCR"/>
<dbReference type="PDBsum" id="7BEA"/>
<dbReference type="PDBsum" id="7C88"/>
<dbReference type="PDBsum" id="7CZD"/>
<dbReference type="PDBsum" id="7DCV"/>
<dbReference type="PDBsum" id="7DY7"/>
<dbReference type="PDBsum" id="7NLD"/>
<dbReference type="PDBsum" id="7OUN"/>
<dbReference type="PDBsum" id="7SJQ"/>
<dbReference type="PDBsum" id="7TPS"/>
<dbReference type="PDBsum" id="7UX5"/>
<dbReference type="PDBsum" id="7UXO"/>
<dbReference type="PDBsum" id="7UXP"/>
<dbReference type="PDBsum" id="7UXQ"/>
<dbReference type="PDBsum" id="7VUN"/>
<dbReference type="PDBsum" id="7XAD"/>
<dbReference type="PDBsum" id="7XAE"/>
<dbReference type="PDBsum" id="7XYQ"/>
<dbReference type="PDBsum" id="7YDS"/>
<dbReference type="PDBsum" id="8ALX"/>
<dbReference type="PDBsum" id="8AOK"/>
<dbReference type="PDBsum" id="8AOM"/>
<dbReference type="PDBsum" id="8JBA"/>
<dbReference type="PDBsum" id="8K5N"/>
<dbReference type="PDBsum" id="8OR1"/>
<dbReference type="PDBsum" id="8P1O"/>
<dbReference type="PDBsum" id="8R6Q"/>
<dbReference type="PDBsum" id="8RPB"/>
<dbReference type="PDBsum" id="8XR5"/>
<dbReference type="PDBsum" id="9INU"/>
<dbReference type="SMR" id="Q9NZQ7"/>
<dbReference type="BioGRID" id="118891">
    <property type="interactions" value="388"/>
</dbReference>
<dbReference type="CORUM" id="Q9NZQ7"/>
<dbReference type="DIP" id="DIP-29731N"/>
<dbReference type="FunCoup" id="Q9NZQ7">
    <property type="interactions" value="458"/>
</dbReference>
<dbReference type="IntAct" id="Q9NZQ7">
    <property type="interactions" value="47"/>
</dbReference>
<dbReference type="STRING" id="9606.ENSP00000370989"/>
<dbReference type="BindingDB" id="Q9NZQ7"/>
<dbReference type="ChEMBL" id="CHEMBL3580522"/>
<dbReference type="DrugBank" id="DB15773">
    <property type="generic name" value="anti-OX40 antibody BMS 986178"/>
</dbReference>
<dbReference type="DrugBank" id="DB11595">
    <property type="generic name" value="Atezolizumab"/>
</dbReference>
<dbReference type="DrugBank" id="DB15771">
    <property type="generic name" value="AUNP-12"/>
</dbReference>
<dbReference type="DrugBank" id="DB11945">
    <property type="generic name" value="Avelumab"/>
</dbReference>
<dbReference type="DrugBank" id="DB15772">
    <property type="generic name" value="CA-170"/>
</dbReference>
<dbReference type="DrugBank" id="DB14776">
    <property type="generic name" value="Camrelizumab"/>
</dbReference>
<dbReference type="DrugBank" id="DB15770">
    <property type="generic name" value="Cosibelimab"/>
</dbReference>
<dbReference type="DrugBank" id="DB11714">
    <property type="generic name" value="Durvalumab"/>
</dbReference>
<dbReference type="DrugBank" id="DB15769">
    <property type="generic name" value="Envafolimab"/>
</dbReference>
<dbReference type="DrugBank" id="DB09035">
    <property type="generic name" value="Nivolumab"/>
</dbReference>
<dbReference type="DrugBank" id="DB09037">
    <property type="generic name" value="Pembrolizumab"/>
</dbReference>
<dbReference type="DrugBank" id="DB00203">
    <property type="generic name" value="Sildenafil"/>
</dbReference>
<dbReference type="DrugBank" id="DB00313">
    <property type="generic name" value="Valproic acid"/>
</dbReference>
<dbReference type="DrugCentral" id="Q9NZQ7"/>
<dbReference type="TCDB" id="8.A.23.5.1">
    <property type="family name" value="the basigin (basigin) family"/>
</dbReference>
<dbReference type="GlyCosmos" id="Q9NZQ7">
    <property type="glycosylation" value="4 sites, No reported glycans"/>
</dbReference>
<dbReference type="GlyGen" id="Q9NZQ7">
    <property type="glycosylation" value="9 sites, 1 N-linked glycan (1 site)"/>
</dbReference>
<dbReference type="iPTMnet" id="Q9NZQ7"/>
<dbReference type="PhosphoSitePlus" id="Q9NZQ7"/>
<dbReference type="SwissPalm" id="Q9NZQ7"/>
<dbReference type="BioMuta" id="CD274"/>
<dbReference type="DMDM" id="83287884"/>
<dbReference type="CPTAC" id="CPTAC-5988"/>
<dbReference type="jPOST" id="Q9NZQ7"/>
<dbReference type="MassIVE" id="Q9NZQ7"/>
<dbReference type="PaxDb" id="9606-ENSP00000370989"/>
<dbReference type="PeptideAtlas" id="Q9NZQ7"/>
<dbReference type="ProteomicsDB" id="83483">
    <molecule id="Q9NZQ7-1"/>
</dbReference>
<dbReference type="ProteomicsDB" id="83484">
    <molecule id="Q9NZQ7-2"/>
</dbReference>
<dbReference type="ProteomicsDB" id="83485">
    <molecule id="Q9NZQ7-3"/>
</dbReference>
<dbReference type="Pumba" id="Q9NZQ7"/>
<dbReference type="ABCD" id="Q9NZQ7">
    <property type="antibodies" value="168 sequenced antibodies"/>
</dbReference>
<dbReference type="Antibodypedia" id="24139">
    <property type="antibodies" value="2465 antibodies from 56 providers"/>
</dbReference>
<dbReference type="CPTC" id="Q9NZQ7">
    <property type="antibodies" value="1 antibody"/>
</dbReference>
<dbReference type="DNASU" id="29126"/>
<dbReference type="Ensembl" id="ENST00000381573.8">
    <molecule id="Q9NZQ7-2"/>
    <property type="protein sequence ID" value="ENSP00000370985.4"/>
    <property type="gene ID" value="ENSG00000120217.14"/>
</dbReference>
<dbReference type="Ensembl" id="ENST00000381577.4">
    <molecule id="Q9NZQ7-1"/>
    <property type="protein sequence ID" value="ENSP00000370989.3"/>
    <property type="gene ID" value="ENSG00000120217.14"/>
</dbReference>
<dbReference type="GeneID" id="29126"/>
<dbReference type="KEGG" id="hsa:29126"/>
<dbReference type="MANE-Select" id="ENST00000381577.4">
    <property type="protein sequence ID" value="ENSP00000370989.3"/>
    <property type="RefSeq nucleotide sequence ID" value="NM_014143.4"/>
    <property type="RefSeq protein sequence ID" value="NP_054862.1"/>
</dbReference>
<dbReference type="UCSC" id="uc003zje.4">
    <molecule id="Q9NZQ7-1"/>
    <property type="organism name" value="human"/>
</dbReference>
<dbReference type="AGR" id="HGNC:17635"/>
<dbReference type="CTD" id="29126"/>
<dbReference type="DisGeNET" id="29126"/>
<dbReference type="GeneCards" id="CD274"/>
<dbReference type="HGNC" id="HGNC:17635">
    <property type="gene designation" value="CD274"/>
</dbReference>
<dbReference type="HPA" id="ENSG00000120217">
    <property type="expression patterns" value="Tissue enhanced (lung)"/>
</dbReference>
<dbReference type="MalaCards" id="CD274"/>
<dbReference type="MIM" id="605402">
    <property type="type" value="gene"/>
</dbReference>
<dbReference type="neXtProt" id="NX_Q9NZQ7"/>
<dbReference type="OpenTargets" id="ENSG00000120217"/>
<dbReference type="PharmGKB" id="PA134915280"/>
<dbReference type="VEuPathDB" id="HostDB:ENSG00000120217"/>
<dbReference type="eggNOG" id="ENOG502S1Y9">
    <property type="taxonomic scope" value="Eukaryota"/>
</dbReference>
<dbReference type="GeneTree" id="ENSGT00940000161430"/>
<dbReference type="HOGENOM" id="CLU_1744717_0_0_1"/>
<dbReference type="InParanoid" id="Q9NZQ7"/>
<dbReference type="OMA" id="YCCMISY"/>
<dbReference type="OrthoDB" id="8680608at2759"/>
<dbReference type="PAN-GO" id="Q9NZQ7">
    <property type="GO annotations" value="7 GO annotations based on evolutionary models"/>
</dbReference>
<dbReference type="PhylomeDB" id="Q9NZQ7"/>
<dbReference type="TreeFam" id="TF331083"/>
<dbReference type="PathwayCommons" id="Q9NZQ7"/>
<dbReference type="Reactome" id="R-HSA-389948">
    <property type="pathway name" value="Co-inhibition by PD-1"/>
</dbReference>
<dbReference type="Reactome" id="R-HSA-9701898">
    <property type="pathway name" value="STAT3 nuclear events downstream of ALK signaling"/>
</dbReference>
<dbReference type="SignaLink" id="Q9NZQ7"/>
<dbReference type="SIGNOR" id="Q9NZQ7"/>
<dbReference type="BioGRID-ORCS" id="29126">
    <property type="hits" value="18 hits in 1159 CRISPR screens"/>
</dbReference>
<dbReference type="ChiTaRS" id="CD274">
    <property type="organism name" value="human"/>
</dbReference>
<dbReference type="EvolutionaryTrace" id="Q9NZQ7"/>
<dbReference type="GeneWiki" id="PD-L1"/>
<dbReference type="GenomeRNAi" id="29126"/>
<dbReference type="Pharos" id="Q9NZQ7">
    <property type="development level" value="Tclin"/>
</dbReference>
<dbReference type="PRO" id="PR:Q9NZQ7"/>
<dbReference type="Proteomes" id="UP000005640">
    <property type="component" value="Chromosome 9"/>
</dbReference>
<dbReference type="RNAct" id="Q9NZQ7">
    <property type="molecule type" value="protein"/>
</dbReference>
<dbReference type="Bgee" id="ENSG00000120217">
    <property type="expression patterns" value="Expressed in cartilage tissue and 146 other cell types or tissues"/>
</dbReference>
<dbReference type="GO" id="GO:0015629">
    <property type="term" value="C:actin cytoskeleton"/>
    <property type="evidence" value="ECO:0000314"/>
    <property type="project" value="HPA"/>
</dbReference>
<dbReference type="GO" id="GO:0031901">
    <property type="term" value="C:early endosome membrane"/>
    <property type="evidence" value="ECO:0000314"/>
    <property type="project" value="UniProtKB"/>
</dbReference>
<dbReference type="GO" id="GO:0009897">
    <property type="term" value="C:external side of plasma membrane"/>
    <property type="evidence" value="ECO:0000318"/>
    <property type="project" value="GO_Central"/>
</dbReference>
<dbReference type="GO" id="GO:0070062">
    <property type="term" value="C:extracellular exosome"/>
    <property type="evidence" value="ECO:0000314"/>
    <property type="project" value="UniProtKB"/>
</dbReference>
<dbReference type="GO" id="GO:0005654">
    <property type="term" value="C:nucleoplasm"/>
    <property type="evidence" value="ECO:0000314"/>
    <property type="project" value="HPA"/>
</dbReference>
<dbReference type="GO" id="GO:0005886">
    <property type="term" value="C:plasma membrane"/>
    <property type="evidence" value="ECO:0000314"/>
    <property type="project" value="HPA"/>
</dbReference>
<dbReference type="GO" id="GO:0055038">
    <property type="term" value="C:recycling endosome membrane"/>
    <property type="evidence" value="ECO:0000314"/>
    <property type="project" value="UniProtKB"/>
</dbReference>
<dbReference type="GO" id="GO:0048018">
    <property type="term" value="F:receptor ligand activity"/>
    <property type="evidence" value="ECO:0000314"/>
    <property type="project" value="UniProtKB"/>
</dbReference>
<dbReference type="GO" id="GO:0003713">
    <property type="term" value="F:transcription coactivator activity"/>
    <property type="evidence" value="ECO:0000314"/>
    <property type="project" value="UniProtKB"/>
</dbReference>
<dbReference type="GO" id="GO:0002250">
    <property type="term" value="P:adaptive immune response"/>
    <property type="evidence" value="ECO:0007669"/>
    <property type="project" value="UniProtKB-KW"/>
</dbReference>
<dbReference type="GO" id="GO:0007166">
    <property type="term" value="P:cell surface receptor signaling pathway"/>
    <property type="evidence" value="ECO:0000314"/>
    <property type="project" value="UniProtKB"/>
</dbReference>
<dbReference type="GO" id="GO:0071222">
    <property type="term" value="P:cellular response to lipopolysaccharide"/>
    <property type="evidence" value="ECO:0000318"/>
    <property type="project" value="GO_Central"/>
</dbReference>
<dbReference type="GO" id="GO:0006955">
    <property type="term" value="P:immune response"/>
    <property type="evidence" value="ECO:0000314"/>
    <property type="project" value="UniProtKB"/>
</dbReference>
<dbReference type="GO" id="GO:0046007">
    <property type="term" value="P:negative regulation of activated T cell proliferation"/>
    <property type="evidence" value="ECO:0000315"/>
    <property type="project" value="UniProtKB"/>
</dbReference>
<dbReference type="GO" id="GO:2000562">
    <property type="term" value="P:negative regulation of CD4-positive, alpha-beta T cell proliferation"/>
    <property type="evidence" value="ECO:0000314"/>
    <property type="project" value="UniProtKB"/>
</dbReference>
<dbReference type="GO" id="GO:2001186">
    <property type="term" value="P:negative regulation of CD8-positive, alpha-beta T cell activation"/>
    <property type="evidence" value="ECO:0000314"/>
    <property type="project" value="UniProt"/>
</dbReference>
<dbReference type="GO" id="GO:0032693">
    <property type="term" value="P:negative regulation of interleukin-10 production"/>
    <property type="evidence" value="ECO:0000315"/>
    <property type="project" value="UniProtKB"/>
</dbReference>
<dbReference type="GO" id="GO:0002841">
    <property type="term" value="P:negative regulation of T cell mediated immune response to tumor cell"/>
    <property type="evidence" value="ECO:0000314"/>
    <property type="project" value="UniProt"/>
</dbReference>
<dbReference type="GO" id="GO:0042130">
    <property type="term" value="P:negative regulation of T cell proliferation"/>
    <property type="evidence" value="ECO:0000318"/>
    <property type="project" value="GO_Central"/>
</dbReference>
<dbReference type="GO" id="GO:1903556">
    <property type="term" value="P:negative regulation of tumor necrosis factor superfamily cytokine production"/>
    <property type="evidence" value="ECO:0000315"/>
    <property type="project" value="UniProtKB"/>
</dbReference>
<dbReference type="GO" id="GO:0032689">
    <property type="term" value="P:negative regulation of type II interferon production"/>
    <property type="evidence" value="ECO:0000315"/>
    <property type="project" value="UniProtKB"/>
</dbReference>
<dbReference type="GO" id="GO:1905404">
    <property type="term" value="P:positive regulation of activated CD8-positive, alpha-beta T cell apoptotic process"/>
    <property type="evidence" value="ECO:0000314"/>
    <property type="project" value="UniProtKB"/>
</dbReference>
<dbReference type="GO" id="GO:0032733">
    <property type="term" value="P:positive regulation of interleukin-10 production"/>
    <property type="evidence" value="ECO:0000314"/>
    <property type="project" value="UniProtKB"/>
</dbReference>
<dbReference type="GO" id="GO:0042102">
    <property type="term" value="P:positive regulation of T cell proliferation"/>
    <property type="evidence" value="ECO:0000318"/>
    <property type="project" value="GO_Central"/>
</dbReference>
<dbReference type="GO" id="GO:0034097">
    <property type="term" value="P:response to cytokine"/>
    <property type="evidence" value="ECO:0000314"/>
    <property type="project" value="AgBase"/>
</dbReference>
<dbReference type="GO" id="GO:0007165">
    <property type="term" value="P:signal transduction"/>
    <property type="evidence" value="ECO:0000314"/>
    <property type="project" value="UniProtKB"/>
</dbReference>
<dbReference type="GO" id="GO:0031295">
    <property type="term" value="P:T cell costimulation"/>
    <property type="evidence" value="ECO:0000314"/>
    <property type="project" value="UniProtKB"/>
</dbReference>
<dbReference type="GO" id="GO:0035666">
    <property type="term" value="P:TRIF-dependent toll-like receptor signaling pathway"/>
    <property type="evidence" value="ECO:0000314"/>
    <property type="project" value="UniProtKB"/>
</dbReference>
<dbReference type="CDD" id="cd20947">
    <property type="entry name" value="IgV_PDl1"/>
    <property type="match status" value="1"/>
</dbReference>
<dbReference type="FunFam" id="2.60.40.10:FF:001299">
    <property type="entry name" value="Programmed cell death 1"/>
    <property type="match status" value="1"/>
</dbReference>
<dbReference type="FunFam" id="2.60.40.10:FF:001063">
    <property type="entry name" value="Programmed cell death ligand 1"/>
    <property type="match status" value="1"/>
</dbReference>
<dbReference type="Gene3D" id="2.60.40.10">
    <property type="entry name" value="Immunoglobulins"/>
    <property type="match status" value="2"/>
</dbReference>
<dbReference type="InterPro" id="IPR013162">
    <property type="entry name" value="CD80_C2-set"/>
</dbReference>
<dbReference type="InterPro" id="IPR007110">
    <property type="entry name" value="Ig-like_dom"/>
</dbReference>
<dbReference type="InterPro" id="IPR036179">
    <property type="entry name" value="Ig-like_dom_sf"/>
</dbReference>
<dbReference type="InterPro" id="IPR013783">
    <property type="entry name" value="Ig-like_fold"/>
</dbReference>
<dbReference type="InterPro" id="IPR003599">
    <property type="entry name" value="Ig_sub"/>
</dbReference>
<dbReference type="InterPro" id="IPR013106">
    <property type="entry name" value="Ig_V-set"/>
</dbReference>
<dbReference type="InterPro" id="IPR051713">
    <property type="entry name" value="T-cell_Activation_Regulation"/>
</dbReference>
<dbReference type="PANTHER" id="PTHR25466:SF3">
    <property type="entry name" value="PROGRAMMED CELL DEATH 1 LIGAND 1"/>
    <property type="match status" value="1"/>
</dbReference>
<dbReference type="PANTHER" id="PTHR25466">
    <property type="entry name" value="T-LYMPHOCYTE ACTIVATION ANTIGEN"/>
    <property type="match status" value="1"/>
</dbReference>
<dbReference type="Pfam" id="PF08205">
    <property type="entry name" value="C2-set_2"/>
    <property type="match status" value="1"/>
</dbReference>
<dbReference type="Pfam" id="PF07686">
    <property type="entry name" value="V-set"/>
    <property type="match status" value="1"/>
</dbReference>
<dbReference type="SMART" id="SM00409">
    <property type="entry name" value="IG"/>
    <property type="match status" value="2"/>
</dbReference>
<dbReference type="SUPFAM" id="SSF48726">
    <property type="entry name" value="Immunoglobulin"/>
    <property type="match status" value="2"/>
</dbReference>
<dbReference type="PROSITE" id="PS50835">
    <property type="entry name" value="IG_LIKE"/>
    <property type="match status" value="2"/>
</dbReference>
<name>PD1L1_HUMAN</name>